<feature type="chain" id="PRO_0000146270" description="Small ribosomal subunit protein uS12">
    <location>
        <begin position="1"/>
        <end position="124"/>
    </location>
</feature>
<feature type="region of interest" description="Disordered" evidence="2">
    <location>
        <begin position="105"/>
        <end position="124"/>
    </location>
</feature>
<feature type="compositionally biased region" description="Basic residues" evidence="2">
    <location>
        <begin position="108"/>
        <end position="118"/>
    </location>
</feature>
<feature type="modified residue" description="3-methylthioaspartic acid" evidence="1">
    <location>
        <position position="89"/>
    </location>
</feature>
<feature type="sequence variant" description="Streptomycin resistant.">
    <original>K</original>
    <variation>N</variation>
    <location>
        <position position="43"/>
    </location>
</feature>
<feature type="sequence variant" description="Streptomycin resistant.">
    <original>K</original>
    <variation>R</variation>
    <location>
        <position position="43"/>
    </location>
</feature>
<feature type="sequence variant" description="Streptomycin resistant.">
    <original>K</original>
    <variation>T</variation>
    <location>
        <position position="43"/>
    </location>
</feature>
<feature type="sequence variant" description="Streptomycin resistant.">
    <original>R</original>
    <variation>L</variation>
    <location>
        <position position="86"/>
    </location>
</feature>
<feature type="sequence variant" description="Streptomycin resistant.">
    <original>K</original>
    <variation>E</variation>
    <location>
        <position position="88"/>
    </location>
</feature>
<feature type="sequence variant" description="Streptomycin resistant.">
    <original>K</original>
    <variation>R</variation>
    <location>
        <position position="88"/>
    </location>
</feature>
<feature type="sequence variant" description="Streptomycin resistant.">
    <original>P</original>
    <variation>H</variation>
    <location>
        <position position="91"/>
    </location>
</feature>
<reference key="1">
    <citation type="journal article" date="1994" name="J. Bacteriol.">
        <title>Cloning and sequence analysis of the rpsL and rpsG genes of Mycobacterium smegmatis and characterization of mutations causing resistance to streptomycin.</title>
        <authorList>
            <person name="Kenney T.J."/>
            <person name="Churchward G."/>
        </authorList>
    </citation>
    <scope>NUCLEOTIDE SEQUENCE [GENOMIC DNA]</scope>
    <scope>VARIANTS STREPTOMYCIN RESISTANT</scope>
    <scope>DOMINANCE OF THE STREPTOMYCIN SENSITIVE ALLELE</scope>
    <source>
        <strain>LR222</strain>
    </source>
</reference>
<dbReference type="EMBL" id="L34681">
    <property type="protein sequence ID" value="AAA62390.1"/>
    <property type="molecule type" value="Genomic_DNA"/>
</dbReference>
<dbReference type="RefSeq" id="WP_007167812.1">
    <property type="nucleotide sequence ID" value="NZ_UGQO01000001.1"/>
</dbReference>
<dbReference type="SMR" id="P0C563"/>
<dbReference type="GeneID" id="97441318"/>
<dbReference type="KEGG" id="msh:LI98_06970"/>
<dbReference type="KEGG" id="msn:LI99_06970"/>
<dbReference type="eggNOG" id="COG0048">
    <property type="taxonomic scope" value="Bacteria"/>
</dbReference>
<dbReference type="OMA" id="VCIRVYT"/>
<dbReference type="GO" id="GO:0015935">
    <property type="term" value="C:small ribosomal subunit"/>
    <property type="evidence" value="ECO:0007669"/>
    <property type="project" value="InterPro"/>
</dbReference>
<dbReference type="GO" id="GO:0019843">
    <property type="term" value="F:rRNA binding"/>
    <property type="evidence" value="ECO:0007669"/>
    <property type="project" value="UniProtKB-UniRule"/>
</dbReference>
<dbReference type="GO" id="GO:0003735">
    <property type="term" value="F:structural constituent of ribosome"/>
    <property type="evidence" value="ECO:0007669"/>
    <property type="project" value="InterPro"/>
</dbReference>
<dbReference type="GO" id="GO:0000049">
    <property type="term" value="F:tRNA binding"/>
    <property type="evidence" value="ECO:0007669"/>
    <property type="project" value="UniProtKB-UniRule"/>
</dbReference>
<dbReference type="GO" id="GO:0046677">
    <property type="term" value="P:response to antibiotic"/>
    <property type="evidence" value="ECO:0007669"/>
    <property type="project" value="UniProtKB-KW"/>
</dbReference>
<dbReference type="GO" id="GO:0006412">
    <property type="term" value="P:translation"/>
    <property type="evidence" value="ECO:0007669"/>
    <property type="project" value="UniProtKB-UniRule"/>
</dbReference>
<dbReference type="CDD" id="cd03368">
    <property type="entry name" value="Ribosomal_S12"/>
    <property type="match status" value="1"/>
</dbReference>
<dbReference type="FunFam" id="2.40.50.140:FF:000001">
    <property type="entry name" value="30S ribosomal protein S12"/>
    <property type="match status" value="1"/>
</dbReference>
<dbReference type="Gene3D" id="2.40.50.140">
    <property type="entry name" value="Nucleic acid-binding proteins"/>
    <property type="match status" value="1"/>
</dbReference>
<dbReference type="HAMAP" id="MF_00403_B">
    <property type="entry name" value="Ribosomal_uS12_B"/>
    <property type="match status" value="1"/>
</dbReference>
<dbReference type="InterPro" id="IPR012340">
    <property type="entry name" value="NA-bd_OB-fold"/>
</dbReference>
<dbReference type="InterPro" id="IPR006032">
    <property type="entry name" value="Ribosomal_uS12"/>
</dbReference>
<dbReference type="InterPro" id="IPR005679">
    <property type="entry name" value="Ribosomal_uS12_bac"/>
</dbReference>
<dbReference type="NCBIfam" id="TIGR00981">
    <property type="entry name" value="rpsL_bact"/>
    <property type="match status" value="1"/>
</dbReference>
<dbReference type="PANTHER" id="PTHR11652">
    <property type="entry name" value="30S RIBOSOMAL PROTEIN S12 FAMILY MEMBER"/>
    <property type="match status" value="1"/>
</dbReference>
<dbReference type="Pfam" id="PF00164">
    <property type="entry name" value="Ribosom_S12_S23"/>
    <property type="match status" value="1"/>
</dbReference>
<dbReference type="PIRSF" id="PIRSF002133">
    <property type="entry name" value="Ribosomal_S12/S23"/>
    <property type="match status" value="1"/>
</dbReference>
<dbReference type="PRINTS" id="PR01034">
    <property type="entry name" value="RIBOSOMALS12"/>
</dbReference>
<dbReference type="SUPFAM" id="SSF50249">
    <property type="entry name" value="Nucleic acid-binding proteins"/>
    <property type="match status" value="1"/>
</dbReference>
<dbReference type="PROSITE" id="PS00055">
    <property type="entry name" value="RIBOSOMAL_S12"/>
    <property type="match status" value="1"/>
</dbReference>
<gene>
    <name type="primary">rpsL</name>
</gene>
<protein>
    <recommendedName>
        <fullName evidence="3">Small ribosomal subunit protein uS12</fullName>
    </recommendedName>
    <alternativeName>
        <fullName>30S ribosomal protein S12</fullName>
    </alternativeName>
</protein>
<organism>
    <name type="scientific">Mycolicibacterium smegmatis</name>
    <name type="common">Mycobacterium smegmatis</name>
    <dbReference type="NCBI Taxonomy" id="1772"/>
    <lineage>
        <taxon>Bacteria</taxon>
        <taxon>Bacillati</taxon>
        <taxon>Actinomycetota</taxon>
        <taxon>Actinomycetes</taxon>
        <taxon>Mycobacteriales</taxon>
        <taxon>Mycobacteriaceae</taxon>
        <taxon>Mycolicibacterium</taxon>
    </lineage>
</organism>
<comment type="function">
    <text evidence="1">With S4 and S5 plays an important role in translational accuracy.</text>
</comment>
<comment type="function">
    <text evidence="1">Interacts with and stabilizes bases of the 16S rRNA that are involved in tRNA selection in the A site and with the mRNA backbone. Located at the interface of the 30S and 50S subunits, it traverses the body of the 30S subunit contacting proteins on the other side and probably holding the rRNA structure together. The combined cluster of proteins S8, S12 and S17 appears to hold together the shoulder and platform of the 30S subunit (By similarity).</text>
</comment>
<comment type="subunit">
    <text evidence="1">Part of the 30S ribosomal subunit. Contacts proteins S8 and S17. May interact with IF1 in the 30S initiation complex (By similarity).</text>
</comment>
<comment type="miscellaneous">
    <text>The streptomycin sensitive allele is dominant to the resistant allele in M.smegmatis.</text>
</comment>
<comment type="similarity">
    <text evidence="3">Belongs to the universal ribosomal protein uS12 family.</text>
</comment>
<evidence type="ECO:0000250" key="1"/>
<evidence type="ECO:0000256" key="2">
    <source>
        <dbReference type="SAM" id="MobiDB-lite"/>
    </source>
</evidence>
<evidence type="ECO:0000305" key="3"/>
<proteinExistence type="inferred from homology"/>
<sequence>MPTIQQLVRKGRRDKIAKVKTAALKGSPQRRGVCTRVYTTTPKKPNSALRKVARVKLTSQVEVTAYIPGEGHNLQEHSMVLVRGGRVKDLPGVRYKIIRGSLDTQGVKNRKQARSRYGAKKEKS</sequence>
<accession>P0C563</accession>
<accession>P41195</accession>
<name>RS12_MYCSM</name>
<keyword id="KW-0046">Antibiotic resistance</keyword>
<keyword id="KW-0488">Methylation</keyword>
<keyword id="KW-0687">Ribonucleoprotein</keyword>
<keyword id="KW-0689">Ribosomal protein</keyword>
<keyword id="KW-0694">RNA-binding</keyword>
<keyword id="KW-0699">rRNA-binding</keyword>
<keyword id="KW-0820">tRNA-binding</keyword>